<dbReference type="EC" id="2.1.3.15" evidence="1"/>
<dbReference type="EMBL" id="AP009552">
    <property type="protein sequence ID" value="BAG05575.1"/>
    <property type="molecule type" value="Genomic_DNA"/>
</dbReference>
<dbReference type="RefSeq" id="WP_002796435.1">
    <property type="nucleotide sequence ID" value="NC_010296.1"/>
</dbReference>
<dbReference type="SMR" id="B0JI13"/>
<dbReference type="STRING" id="449447.MAE_57530"/>
<dbReference type="PaxDb" id="449447-MAE_57530"/>
<dbReference type="EnsemblBacteria" id="BAG05575">
    <property type="protein sequence ID" value="BAG05575"/>
    <property type="gene ID" value="MAE_57530"/>
</dbReference>
<dbReference type="KEGG" id="mar:MAE_57530"/>
<dbReference type="eggNOG" id="COG0777">
    <property type="taxonomic scope" value="Bacteria"/>
</dbReference>
<dbReference type="HOGENOM" id="CLU_015486_1_1_3"/>
<dbReference type="BioCyc" id="MAER449447:MAE_RS25060-MONOMER"/>
<dbReference type="UniPathway" id="UPA00655">
    <property type="reaction ID" value="UER00711"/>
</dbReference>
<dbReference type="Proteomes" id="UP000001510">
    <property type="component" value="Chromosome"/>
</dbReference>
<dbReference type="GO" id="GO:0009317">
    <property type="term" value="C:acetyl-CoA carboxylase complex"/>
    <property type="evidence" value="ECO:0007669"/>
    <property type="project" value="InterPro"/>
</dbReference>
<dbReference type="GO" id="GO:0003989">
    <property type="term" value="F:acetyl-CoA carboxylase activity"/>
    <property type="evidence" value="ECO:0007669"/>
    <property type="project" value="InterPro"/>
</dbReference>
<dbReference type="GO" id="GO:0005524">
    <property type="term" value="F:ATP binding"/>
    <property type="evidence" value="ECO:0007669"/>
    <property type="project" value="UniProtKB-KW"/>
</dbReference>
<dbReference type="GO" id="GO:0016743">
    <property type="term" value="F:carboxyl- or carbamoyltransferase activity"/>
    <property type="evidence" value="ECO:0007669"/>
    <property type="project" value="UniProtKB-UniRule"/>
</dbReference>
<dbReference type="GO" id="GO:0008270">
    <property type="term" value="F:zinc ion binding"/>
    <property type="evidence" value="ECO:0007669"/>
    <property type="project" value="UniProtKB-UniRule"/>
</dbReference>
<dbReference type="GO" id="GO:0006633">
    <property type="term" value="P:fatty acid biosynthetic process"/>
    <property type="evidence" value="ECO:0007669"/>
    <property type="project" value="UniProtKB-KW"/>
</dbReference>
<dbReference type="GO" id="GO:2001295">
    <property type="term" value="P:malonyl-CoA biosynthetic process"/>
    <property type="evidence" value="ECO:0007669"/>
    <property type="project" value="UniProtKB-UniRule"/>
</dbReference>
<dbReference type="Gene3D" id="3.90.226.10">
    <property type="entry name" value="2-enoyl-CoA Hydratase, Chain A, domain 1"/>
    <property type="match status" value="1"/>
</dbReference>
<dbReference type="HAMAP" id="MF_01395">
    <property type="entry name" value="AcetylCoA_CT_beta"/>
    <property type="match status" value="1"/>
</dbReference>
<dbReference type="InterPro" id="IPR034733">
    <property type="entry name" value="AcCoA_carboxyl_beta"/>
</dbReference>
<dbReference type="InterPro" id="IPR000438">
    <property type="entry name" value="Acetyl_CoA_COase_Trfase_b_su"/>
</dbReference>
<dbReference type="InterPro" id="IPR029045">
    <property type="entry name" value="ClpP/crotonase-like_dom_sf"/>
</dbReference>
<dbReference type="InterPro" id="IPR011762">
    <property type="entry name" value="COA_CT_N"/>
</dbReference>
<dbReference type="InterPro" id="IPR041010">
    <property type="entry name" value="Znf-ACC"/>
</dbReference>
<dbReference type="NCBIfam" id="TIGR00515">
    <property type="entry name" value="accD"/>
    <property type="match status" value="1"/>
</dbReference>
<dbReference type="PANTHER" id="PTHR42995">
    <property type="entry name" value="ACETYL-COENZYME A CARBOXYLASE CARBOXYL TRANSFERASE SUBUNIT BETA, CHLOROPLASTIC"/>
    <property type="match status" value="1"/>
</dbReference>
<dbReference type="PANTHER" id="PTHR42995:SF5">
    <property type="entry name" value="ACETYL-COENZYME A CARBOXYLASE CARBOXYL TRANSFERASE SUBUNIT BETA, CHLOROPLASTIC"/>
    <property type="match status" value="1"/>
</dbReference>
<dbReference type="Pfam" id="PF01039">
    <property type="entry name" value="Carboxyl_trans"/>
    <property type="match status" value="1"/>
</dbReference>
<dbReference type="Pfam" id="PF17848">
    <property type="entry name" value="Zn_ribbon_ACC"/>
    <property type="match status" value="1"/>
</dbReference>
<dbReference type="PRINTS" id="PR01070">
    <property type="entry name" value="ACCCTRFRASEB"/>
</dbReference>
<dbReference type="SUPFAM" id="SSF52096">
    <property type="entry name" value="ClpP/crotonase"/>
    <property type="match status" value="1"/>
</dbReference>
<dbReference type="PROSITE" id="PS50980">
    <property type="entry name" value="COA_CT_NTER"/>
    <property type="match status" value="1"/>
</dbReference>
<accession>B0JI13</accession>
<gene>
    <name evidence="1" type="primary">accD</name>
    <name type="ordered locus">MAE_57530</name>
</gene>
<reference key="1">
    <citation type="journal article" date="2007" name="DNA Res.">
        <title>Complete genomic structure of the bloom-forming toxic cyanobacterium Microcystis aeruginosa NIES-843.</title>
        <authorList>
            <person name="Kaneko T."/>
            <person name="Nakajima N."/>
            <person name="Okamoto S."/>
            <person name="Suzuki I."/>
            <person name="Tanabe Y."/>
            <person name="Tamaoki M."/>
            <person name="Nakamura Y."/>
            <person name="Kasai F."/>
            <person name="Watanabe A."/>
            <person name="Kawashima K."/>
            <person name="Kishida Y."/>
            <person name="Ono A."/>
            <person name="Shimizu Y."/>
            <person name="Takahashi C."/>
            <person name="Minami C."/>
            <person name="Fujishiro T."/>
            <person name="Kohara M."/>
            <person name="Katoh M."/>
            <person name="Nakazaki N."/>
            <person name="Nakayama S."/>
            <person name="Yamada M."/>
            <person name="Tabata S."/>
            <person name="Watanabe M.M."/>
        </authorList>
    </citation>
    <scope>NUCLEOTIDE SEQUENCE [LARGE SCALE GENOMIC DNA]</scope>
    <source>
        <strain>NIES-843 / IAM M-247</strain>
    </source>
</reference>
<comment type="function">
    <text evidence="1">Component of the acetyl coenzyme A carboxylase (ACC) complex. Biotin carboxylase (BC) catalyzes the carboxylation of biotin on its carrier protein (BCCP) and then the CO(2) group is transferred by the transcarboxylase to acetyl-CoA to form malonyl-CoA.</text>
</comment>
<comment type="catalytic activity">
    <reaction evidence="1">
        <text>N(6)-carboxybiotinyl-L-lysyl-[protein] + acetyl-CoA = N(6)-biotinyl-L-lysyl-[protein] + malonyl-CoA</text>
        <dbReference type="Rhea" id="RHEA:54728"/>
        <dbReference type="Rhea" id="RHEA-COMP:10505"/>
        <dbReference type="Rhea" id="RHEA-COMP:10506"/>
        <dbReference type="ChEBI" id="CHEBI:57288"/>
        <dbReference type="ChEBI" id="CHEBI:57384"/>
        <dbReference type="ChEBI" id="CHEBI:83144"/>
        <dbReference type="ChEBI" id="CHEBI:83145"/>
        <dbReference type="EC" id="2.1.3.15"/>
    </reaction>
</comment>
<comment type="cofactor">
    <cofactor evidence="1">
        <name>Zn(2+)</name>
        <dbReference type="ChEBI" id="CHEBI:29105"/>
    </cofactor>
    <text evidence="1">Binds 1 zinc ion per subunit.</text>
</comment>
<comment type="pathway">
    <text evidence="1">Lipid metabolism; malonyl-CoA biosynthesis; malonyl-CoA from acetyl-CoA: step 1/1.</text>
</comment>
<comment type="subunit">
    <text evidence="1">Acetyl-CoA carboxylase is a heterohexamer composed of biotin carboxyl carrier protein (AccB), biotin carboxylase (AccC) and two subunits each of ACCase subunit alpha (AccA) and ACCase subunit beta (AccD).</text>
</comment>
<comment type="subcellular location">
    <subcellularLocation>
        <location evidence="1">Cytoplasm</location>
    </subcellularLocation>
</comment>
<comment type="similarity">
    <text evidence="1">Belongs to the AccD/PCCB family.</text>
</comment>
<organism>
    <name type="scientific">Microcystis aeruginosa (strain NIES-843 / IAM M-2473)</name>
    <dbReference type="NCBI Taxonomy" id="449447"/>
    <lineage>
        <taxon>Bacteria</taxon>
        <taxon>Bacillati</taxon>
        <taxon>Cyanobacteriota</taxon>
        <taxon>Cyanophyceae</taxon>
        <taxon>Oscillatoriophycideae</taxon>
        <taxon>Chroococcales</taxon>
        <taxon>Microcystaceae</taxon>
        <taxon>Microcystis</taxon>
    </lineage>
</organism>
<sequence>MSLFDWFANRQKTEPKVQQQQEREIADGLWTKCPNCGVLAYTKDLLANQLVCLDCGHHNRVESEERIRQLVDANTWNCLDEQIRPTDPLKFRDRKSYSDRLRETQEKTGLTDAVRTGTGTIDGLPLALGVMDFRFMGGSMGSVVGEKLCRLTEQATDESLPLVIICASGGARMQEGMLSLMQMAKISGALNRHREAKLLYIPVLTNPTTGGVTASFAMLGDIIIAEPKATIGFAGKRVIEQTLREKLPEGFQTSEYLLKHGFVDAIVPRTHLKKTLAQLISLHQPFFPLLSPLNSHHHYGQPELIPLKTAQGQTTV</sequence>
<protein>
    <recommendedName>
        <fullName evidence="1">Acetyl-coenzyme A carboxylase carboxyl transferase subunit beta</fullName>
        <shortName evidence="1">ACCase subunit beta</shortName>
        <shortName evidence="1">Acetyl-CoA carboxylase carboxyltransferase subunit beta</shortName>
        <ecNumber evidence="1">2.1.3.15</ecNumber>
    </recommendedName>
</protein>
<evidence type="ECO:0000255" key="1">
    <source>
        <dbReference type="HAMAP-Rule" id="MF_01395"/>
    </source>
</evidence>
<evidence type="ECO:0000255" key="2">
    <source>
        <dbReference type="PROSITE-ProRule" id="PRU01136"/>
    </source>
</evidence>
<keyword id="KW-0067">ATP-binding</keyword>
<keyword id="KW-0963">Cytoplasm</keyword>
<keyword id="KW-0275">Fatty acid biosynthesis</keyword>
<keyword id="KW-0276">Fatty acid metabolism</keyword>
<keyword id="KW-0444">Lipid biosynthesis</keyword>
<keyword id="KW-0443">Lipid metabolism</keyword>
<keyword id="KW-0479">Metal-binding</keyword>
<keyword id="KW-0547">Nucleotide-binding</keyword>
<keyword id="KW-0808">Transferase</keyword>
<keyword id="KW-0862">Zinc</keyword>
<keyword id="KW-0863">Zinc-finger</keyword>
<feature type="chain" id="PRO_0000359011" description="Acetyl-coenzyme A carboxylase carboxyl transferase subunit beta">
    <location>
        <begin position="1"/>
        <end position="316"/>
    </location>
</feature>
<feature type="domain" description="CoA carboxyltransferase N-terminal" evidence="2">
    <location>
        <begin position="29"/>
        <end position="298"/>
    </location>
</feature>
<feature type="zinc finger region" description="C4-type" evidence="1">
    <location>
        <begin position="33"/>
        <end position="55"/>
    </location>
</feature>
<feature type="binding site" evidence="1">
    <location>
        <position position="33"/>
    </location>
    <ligand>
        <name>Zn(2+)</name>
        <dbReference type="ChEBI" id="CHEBI:29105"/>
    </ligand>
</feature>
<feature type="binding site" evidence="1">
    <location>
        <position position="36"/>
    </location>
    <ligand>
        <name>Zn(2+)</name>
        <dbReference type="ChEBI" id="CHEBI:29105"/>
    </ligand>
</feature>
<feature type="binding site" evidence="1">
    <location>
        <position position="52"/>
    </location>
    <ligand>
        <name>Zn(2+)</name>
        <dbReference type="ChEBI" id="CHEBI:29105"/>
    </ligand>
</feature>
<feature type="binding site" evidence="1">
    <location>
        <position position="55"/>
    </location>
    <ligand>
        <name>Zn(2+)</name>
        <dbReference type="ChEBI" id="CHEBI:29105"/>
    </ligand>
</feature>
<name>ACCD_MICAN</name>
<proteinExistence type="inferred from homology"/>